<protein>
    <recommendedName>
        <fullName>Caspase recruitment domain-containing protein 16</fullName>
    </recommendedName>
    <alternativeName>
        <fullName>Caspase recruitment domain-only protein 1</fullName>
        <shortName>CARD-only protein 1</shortName>
    </alternativeName>
    <alternativeName>
        <fullName>Caspase-1 inhibitor COP</fullName>
    </alternativeName>
    <alternativeName>
        <fullName>Pseudo interleukin-1 beta converting enzyme</fullName>
        <shortName>Pseudo-ICE</shortName>
        <shortName>Pseudo-IL1B-converting enzyme</shortName>
    </alternativeName>
</protein>
<organism>
    <name type="scientific">Homo sapiens</name>
    <name type="common">Human</name>
    <dbReference type="NCBI Taxonomy" id="9606"/>
    <lineage>
        <taxon>Eukaryota</taxon>
        <taxon>Metazoa</taxon>
        <taxon>Chordata</taxon>
        <taxon>Craniata</taxon>
        <taxon>Vertebrata</taxon>
        <taxon>Euteleostomi</taxon>
        <taxon>Mammalia</taxon>
        <taxon>Eutheria</taxon>
        <taxon>Euarchontoglires</taxon>
        <taxon>Primates</taxon>
        <taxon>Haplorrhini</taxon>
        <taxon>Catarrhini</taxon>
        <taxon>Hominidae</taxon>
        <taxon>Homo</taxon>
    </lineage>
</organism>
<keyword id="KW-0025">Alternative splicing</keyword>
<keyword id="KW-0646">Protease inhibitor</keyword>
<keyword id="KW-1267">Proteomics identification</keyword>
<keyword id="KW-1185">Reference proteome</keyword>
<keyword id="KW-0789">Thiol protease inhibitor</keyword>
<comment type="function">
    <text evidence="2 3 6">Caspase inhibitor. Acts as a regulator of procaspase-1/CASP1 activation implicated in the regulation of the proteolytic maturation of pro-interleukin-1 beta (IL1B) and its release during inflammation. Inhibits the release of IL1B in response to LPS in monocytes. Also induces NF-kappa-B activation during the pro-inflammatory cytokine response. Also able to inhibit CASP1-mediated neuronal cell death, TNF-alpha, hypoxia-, UV-, and staurosporine-mediated cell death but not ER stress-mediated cell death. Acts by preventing activation of caspases CASP1 and CASP4, possibly by preventing the interaction between CASP1 and RIPK2.</text>
</comment>
<comment type="subunit">
    <text evidence="2 3 4 6">Homooligomer. Interacts with CASP1, CASP4, CARD8 and RIPK2.</text>
</comment>
<comment type="alternative products">
    <event type="alternative splicing"/>
    <isoform>
        <id>Q5EG05-1</id>
        <name>1</name>
        <sequence type="displayed"/>
    </isoform>
    <isoform>
        <id>Q5EG05-2</id>
        <name>2</name>
        <sequence type="described" ref="VSP_035216"/>
    </isoform>
</comment>
<comment type="tissue specificity">
    <text evidence="2 3">Widely expressed. Expressed at higher level in placenta, spleen, lymph node and bone marrow. Weakly or not expressed in thymus.</text>
</comment>
<comment type="induction">
    <text evidence="5">Down-regulated in patients suffering of Huntington disease.</text>
</comment>
<gene>
    <name type="primary">CARD16</name>
    <name type="synonym">COP</name>
    <name type="synonym">COP1</name>
</gene>
<proteinExistence type="evidence at protein level"/>
<feature type="chain" id="PRO_0000349180" description="Caspase recruitment domain-containing protein 16">
    <location>
        <begin position="1"/>
        <end position="197"/>
    </location>
</feature>
<feature type="domain" description="CARD" evidence="1">
    <location>
        <begin position="1"/>
        <end position="91"/>
    </location>
</feature>
<feature type="splice variant" id="VSP_035216" description="In isoform 2." evidence="7 8 9">
    <original>ALQAVQDNPAMPTCSSPEGRIKLCFLEDAQRIWKQKLQRCHVQNTIIKWSERYTSGSFEMQWLFLRTNFIERFWRNILLLPLHKGSLYPRIPGLGKELQTGTHKLS</original>
    <variation>GPIPGN</variation>
    <location>
        <begin position="92"/>
        <end position="197"/>
    </location>
</feature>
<feature type="sequence variant" id="VAR_046279" description="In dbSNP:rs35966314.">
    <original>R</original>
    <variation>S</variation>
    <location>
        <position position="33"/>
    </location>
</feature>
<feature type="sequence variant" id="VAR_046280" description="In dbSNP:rs1042744.">
    <original>Q</original>
    <variation>K</variation>
    <location>
        <position position="37"/>
    </location>
</feature>
<feature type="sequence variant" id="VAR_046281" description="In dbSNP:rs34534919.">
    <original>A</original>
    <variation>D</variation>
    <location>
        <position position="56"/>
    </location>
</feature>
<feature type="sequence variant" id="VAR_046282" description="In dbSNP:rs542571.">
    <original>N</original>
    <variation>I</variation>
    <location>
        <position position="167"/>
    </location>
</feature>
<sequence length="197" mass="22625">MADKVLKEKRKLFIHSMGEGTINGLLDELLQTRVLNQEEMEKVKRENATVMDKTRALIDSVIPKGAQACQICITYICEEDSYLAETLGLSAALQAVQDNPAMPTCSSPEGRIKLCFLEDAQRIWKQKLQRCHVQNTIIKWSERYTSGSFEMQWLFLRTNFIERFWRNILLLPLHKGSLYPRIPGLGKELQTGTHKLS</sequence>
<reference key="1">
    <citation type="journal article" date="2001" name="Cell Death Differ.">
        <title>Regulation of IL-1beta generation by Pseudo-ICE and ICEBERG, two dominant negative caspase recruitment domain proteins.</title>
        <authorList>
            <person name="Druilhe A."/>
            <person name="Srinivasula S.M."/>
            <person name="Razmara M."/>
            <person name="Ahmad M."/>
            <person name="Alnemri E.S."/>
        </authorList>
    </citation>
    <scope>NUCLEOTIDE SEQUENCE [MRNA] (ISOFORM 2)</scope>
    <scope>FUNCTION</scope>
    <scope>TISSUE SPECIFICITY</scope>
    <scope>INTERACTION WITH CASP1 AND RIPK2</scope>
</reference>
<reference key="2">
    <citation type="submission" date="2005-01" db="EMBL/GenBank/DDBJ databases">
        <title>Novel splicing variants of some human genes.</title>
        <authorList>
            <person name="Wang P.Z."/>
            <person name="Wang F."/>
            <person name="Wang X."/>
            <person name="Wu J."/>
        </authorList>
    </citation>
    <scope>NUCLEOTIDE SEQUENCE [MRNA] (ISOFORM 1)</scope>
</reference>
<reference key="3">
    <citation type="journal article" date="2004" name="Nat. Genet.">
        <title>Complete sequencing and characterization of 21,243 full-length human cDNAs.</title>
        <authorList>
            <person name="Ota T."/>
            <person name="Suzuki Y."/>
            <person name="Nishikawa T."/>
            <person name="Otsuki T."/>
            <person name="Sugiyama T."/>
            <person name="Irie R."/>
            <person name="Wakamatsu A."/>
            <person name="Hayashi K."/>
            <person name="Sato H."/>
            <person name="Nagai K."/>
            <person name="Kimura K."/>
            <person name="Makita H."/>
            <person name="Sekine M."/>
            <person name="Obayashi M."/>
            <person name="Nishi T."/>
            <person name="Shibahara T."/>
            <person name="Tanaka T."/>
            <person name="Ishii S."/>
            <person name="Yamamoto J."/>
            <person name="Saito K."/>
            <person name="Kawai Y."/>
            <person name="Isono Y."/>
            <person name="Nakamura Y."/>
            <person name="Nagahari K."/>
            <person name="Murakami K."/>
            <person name="Yasuda T."/>
            <person name="Iwayanagi T."/>
            <person name="Wagatsuma M."/>
            <person name="Shiratori A."/>
            <person name="Sudo H."/>
            <person name="Hosoiri T."/>
            <person name="Kaku Y."/>
            <person name="Kodaira H."/>
            <person name="Kondo H."/>
            <person name="Sugawara M."/>
            <person name="Takahashi M."/>
            <person name="Kanda K."/>
            <person name="Yokoi T."/>
            <person name="Furuya T."/>
            <person name="Kikkawa E."/>
            <person name="Omura Y."/>
            <person name="Abe K."/>
            <person name="Kamihara K."/>
            <person name="Katsuta N."/>
            <person name="Sato K."/>
            <person name="Tanikawa M."/>
            <person name="Yamazaki M."/>
            <person name="Ninomiya K."/>
            <person name="Ishibashi T."/>
            <person name="Yamashita H."/>
            <person name="Murakawa K."/>
            <person name="Fujimori K."/>
            <person name="Tanai H."/>
            <person name="Kimata M."/>
            <person name="Watanabe M."/>
            <person name="Hiraoka S."/>
            <person name="Chiba Y."/>
            <person name="Ishida S."/>
            <person name="Ono Y."/>
            <person name="Takiguchi S."/>
            <person name="Watanabe S."/>
            <person name="Yosida M."/>
            <person name="Hotuta T."/>
            <person name="Kusano J."/>
            <person name="Kanehori K."/>
            <person name="Takahashi-Fujii A."/>
            <person name="Hara H."/>
            <person name="Tanase T.-O."/>
            <person name="Nomura Y."/>
            <person name="Togiya S."/>
            <person name="Komai F."/>
            <person name="Hara R."/>
            <person name="Takeuchi K."/>
            <person name="Arita M."/>
            <person name="Imose N."/>
            <person name="Musashino K."/>
            <person name="Yuuki H."/>
            <person name="Oshima A."/>
            <person name="Sasaki N."/>
            <person name="Aotsuka S."/>
            <person name="Yoshikawa Y."/>
            <person name="Matsunawa H."/>
            <person name="Ichihara T."/>
            <person name="Shiohata N."/>
            <person name="Sano S."/>
            <person name="Moriya S."/>
            <person name="Momiyama H."/>
            <person name="Satoh N."/>
            <person name="Takami S."/>
            <person name="Terashima Y."/>
            <person name="Suzuki O."/>
            <person name="Nakagawa S."/>
            <person name="Senoh A."/>
            <person name="Mizoguchi H."/>
            <person name="Goto Y."/>
            <person name="Shimizu F."/>
            <person name="Wakebe H."/>
            <person name="Hishigaki H."/>
            <person name="Watanabe T."/>
            <person name="Sugiyama A."/>
            <person name="Takemoto M."/>
            <person name="Kawakami B."/>
            <person name="Yamazaki M."/>
            <person name="Watanabe K."/>
            <person name="Kumagai A."/>
            <person name="Itakura S."/>
            <person name="Fukuzumi Y."/>
            <person name="Fujimori Y."/>
            <person name="Komiyama M."/>
            <person name="Tashiro H."/>
            <person name="Tanigami A."/>
            <person name="Fujiwara T."/>
            <person name="Ono T."/>
            <person name="Yamada K."/>
            <person name="Fujii Y."/>
            <person name="Ozaki K."/>
            <person name="Hirao M."/>
            <person name="Ohmori Y."/>
            <person name="Kawabata A."/>
            <person name="Hikiji T."/>
            <person name="Kobatake N."/>
            <person name="Inagaki H."/>
            <person name="Ikema Y."/>
            <person name="Okamoto S."/>
            <person name="Okitani R."/>
            <person name="Kawakami T."/>
            <person name="Noguchi S."/>
            <person name="Itoh T."/>
            <person name="Shigeta K."/>
            <person name="Senba T."/>
            <person name="Matsumura K."/>
            <person name="Nakajima Y."/>
            <person name="Mizuno T."/>
            <person name="Morinaga M."/>
            <person name="Sasaki M."/>
            <person name="Togashi T."/>
            <person name="Oyama M."/>
            <person name="Hata H."/>
            <person name="Watanabe M."/>
            <person name="Komatsu T."/>
            <person name="Mizushima-Sugano J."/>
            <person name="Satoh T."/>
            <person name="Shirai Y."/>
            <person name="Takahashi Y."/>
            <person name="Nakagawa K."/>
            <person name="Okumura K."/>
            <person name="Nagase T."/>
            <person name="Nomura N."/>
            <person name="Kikuchi H."/>
            <person name="Masuho Y."/>
            <person name="Yamashita R."/>
            <person name="Nakai K."/>
            <person name="Yada T."/>
            <person name="Nakamura Y."/>
            <person name="Ohara O."/>
            <person name="Isogai T."/>
            <person name="Sugano S."/>
        </authorList>
    </citation>
    <scope>NUCLEOTIDE SEQUENCE [LARGE SCALE MRNA] (ISOFORM 2)</scope>
    <source>
        <tissue>Spleen</tissue>
    </source>
</reference>
<reference key="4">
    <citation type="submission" date="2005-07" db="EMBL/GenBank/DDBJ databases">
        <authorList>
            <person name="Mural R.J."/>
            <person name="Istrail S."/>
            <person name="Sutton G.G."/>
            <person name="Florea L."/>
            <person name="Halpern A.L."/>
            <person name="Mobarry C.M."/>
            <person name="Lippert R."/>
            <person name="Walenz B."/>
            <person name="Shatkay H."/>
            <person name="Dew I."/>
            <person name="Miller J.R."/>
            <person name="Flanigan M.J."/>
            <person name="Edwards N.J."/>
            <person name="Bolanos R."/>
            <person name="Fasulo D."/>
            <person name="Halldorsson B.V."/>
            <person name="Hannenhalli S."/>
            <person name="Turner R."/>
            <person name="Yooseph S."/>
            <person name="Lu F."/>
            <person name="Nusskern D.R."/>
            <person name="Shue B.C."/>
            <person name="Zheng X.H."/>
            <person name="Zhong F."/>
            <person name="Delcher A.L."/>
            <person name="Huson D.H."/>
            <person name="Kravitz S.A."/>
            <person name="Mouchard L."/>
            <person name="Reinert K."/>
            <person name="Remington K.A."/>
            <person name="Clark A.G."/>
            <person name="Waterman M.S."/>
            <person name="Eichler E.E."/>
            <person name="Adams M.D."/>
            <person name="Hunkapiller M.W."/>
            <person name="Myers E.W."/>
            <person name="Venter J.C."/>
        </authorList>
    </citation>
    <scope>NUCLEOTIDE SEQUENCE [LARGE SCALE GENOMIC DNA]</scope>
</reference>
<reference key="5">
    <citation type="journal article" date="2004" name="Genome Res.">
        <title>The status, quality, and expansion of the NIH full-length cDNA project: the Mammalian Gene Collection (MGC).</title>
        <authorList>
            <consortium name="The MGC Project Team"/>
        </authorList>
    </citation>
    <scope>NUCLEOTIDE SEQUENCE [LARGE SCALE MRNA] (ISOFORM 2)</scope>
</reference>
<reference key="6">
    <citation type="journal article" date="2001" name="J. Biol. Chem.">
        <title>Cop, a caspase recruitment domain-containing protein and inhibitor of caspase-1 activation processing.</title>
        <authorList>
            <person name="Lee S.H."/>
            <person name="Stehlik C."/>
            <person name="Reed J.C."/>
        </authorList>
    </citation>
    <scope>FUNCTION</scope>
    <scope>TISSUE SPECIFICITY</scope>
    <scope>SUBUNIT</scope>
    <scope>INTERACTION WITH CASP1 AND RIPK2</scope>
</reference>
<reference key="7">
    <citation type="journal article" date="2002" name="J. Biol. Chem.">
        <title>CARD-8 protein, a new CARD family member that regulates caspase-1 activation and apoptosis.</title>
        <authorList>
            <person name="Razmara M."/>
            <person name="Srinivasula S.M."/>
            <person name="Wang L."/>
            <person name="Poyet J.-L."/>
            <person name="Geddes B.J."/>
            <person name="DiStefano P.S."/>
            <person name="Bertin J."/>
            <person name="Alnemri E.S."/>
        </authorList>
    </citation>
    <scope>INTERACTION WITH CARD8</scope>
</reference>
<reference key="8">
    <citation type="journal article" date="2005" name="J. Neurosci.">
        <title>Dysregulation of receptor interacting protein-2 and caspase recruitment domain only protein mediates aberrant caspase-1 activation in Huntington's disease.</title>
        <authorList>
            <person name="Wang X."/>
            <person name="Wang H."/>
            <person name="Figueroa B.E."/>
            <person name="Zhang W.-H."/>
            <person name="Huo C."/>
            <person name="Guan Y."/>
            <person name="Zhang Y."/>
            <person name="Bruey J.-M."/>
            <person name="Reed J.C."/>
            <person name="Friedlander R.M."/>
        </authorList>
    </citation>
    <scope>INDUCTION</scope>
</reference>
<reference key="9">
    <citation type="journal article" date="2006" name="Biochim. Biophys. Acta">
        <title>Protective role of Cop in Rip2/caspase-1/caspase-4-mediated HeLa cell death.</title>
        <authorList>
            <person name="Wang X."/>
            <person name="Narayanan M."/>
            <person name="Bruey J.-M."/>
            <person name="Rigamonti D."/>
            <person name="Cattaneo E."/>
            <person name="Reed J.C."/>
            <person name="Friedlander R.M."/>
        </authorList>
    </citation>
    <scope>FUNCTION</scope>
    <scope>INTERACTION WITH CASP4</scope>
</reference>
<reference key="10">
    <citation type="journal article" date="2011" name="BMC Syst. Biol.">
        <title>Initial characterization of the human central proteome.</title>
        <authorList>
            <person name="Burkard T.R."/>
            <person name="Planyavsky M."/>
            <person name="Kaupe I."/>
            <person name="Breitwieser F.P."/>
            <person name="Buerckstuemmer T."/>
            <person name="Bennett K.L."/>
            <person name="Superti-Furga G."/>
            <person name="Colinge J."/>
        </authorList>
    </citation>
    <scope>IDENTIFICATION BY MASS SPECTROMETRY [LARGE SCALE ANALYSIS]</scope>
</reference>
<evidence type="ECO:0000255" key="1">
    <source>
        <dbReference type="PROSITE-ProRule" id="PRU00046"/>
    </source>
</evidence>
<evidence type="ECO:0000269" key="2">
    <source>
    </source>
</evidence>
<evidence type="ECO:0000269" key="3">
    <source>
    </source>
</evidence>
<evidence type="ECO:0000269" key="4">
    <source>
    </source>
</evidence>
<evidence type="ECO:0000269" key="5">
    <source>
    </source>
</evidence>
<evidence type="ECO:0000269" key="6">
    <source>
    </source>
</evidence>
<evidence type="ECO:0000303" key="7">
    <source>
    </source>
</evidence>
<evidence type="ECO:0000303" key="8">
    <source>
    </source>
</evidence>
<evidence type="ECO:0000303" key="9">
    <source>
    </source>
</evidence>
<dbReference type="EMBL" id="AF367017">
    <property type="protein sequence ID" value="AAK71682.1"/>
    <property type="molecule type" value="mRNA"/>
</dbReference>
<dbReference type="EMBL" id="AY885669">
    <property type="protein sequence ID" value="AAW78563.1"/>
    <property type="molecule type" value="mRNA"/>
</dbReference>
<dbReference type="EMBL" id="AK311902">
    <property type="protein sequence ID" value="BAG34843.1"/>
    <property type="molecule type" value="mRNA"/>
</dbReference>
<dbReference type="EMBL" id="CH471065">
    <property type="protein sequence ID" value="EAW67062.1"/>
    <property type="molecule type" value="Genomic_DNA"/>
</dbReference>
<dbReference type="EMBL" id="BC117478">
    <property type="protein sequence ID" value="AAI17479.1"/>
    <property type="molecule type" value="mRNA"/>
</dbReference>
<dbReference type="EMBL" id="BC117480">
    <property type="protein sequence ID" value="AAI17481.1"/>
    <property type="molecule type" value="mRNA"/>
</dbReference>
<dbReference type="CCDS" id="CCDS41705.1">
    <molecule id="Q5EG05-2"/>
</dbReference>
<dbReference type="RefSeq" id="NP_001017534.1">
    <property type="nucleotide sequence ID" value="NM_001017534.1"/>
</dbReference>
<dbReference type="RefSeq" id="NP_443121.1">
    <molecule id="Q5EG05-2"/>
    <property type="nucleotide sequence ID" value="NM_052889.4"/>
</dbReference>
<dbReference type="SMR" id="Q5EG05"/>
<dbReference type="BioGRID" id="125339">
    <property type="interactions" value="32"/>
</dbReference>
<dbReference type="FunCoup" id="Q5EG05">
    <property type="interactions" value="186"/>
</dbReference>
<dbReference type="IntAct" id="Q5EG05">
    <property type="interactions" value="5"/>
</dbReference>
<dbReference type="MINT" id="Q5EG05"/>
<dbReference type="STRING" id="9606.ENSP00000364858"/>
<dbReference type="iPTMnet" id="Q5EG05"/>
<dbReference type="PhosphoSitePlus" id="Q5EG05"/>
<dbReference type="BioMuta" id="CARD16"/>
<dbReference type="DMDM" id="74722547"/>
<dbReference type="jPOST" id="Q5EG05"/>
<dbReference type="MassIVE" id="Q5EG05"/>
<dbReference type="PaxDb" id="9606-ENSP00000364858"/>
<dbReference type="PeptideAtlas" id="Q5EG05"/>
<dbReference type="ProteomicsDB" id="62773">
    <molecule id="Q5EG05-1"/>
</dbReference>
<dbReference type="ProteomicsDB" id="62774">
    <molecule id="Q5EG05-2"/>
</dbReference>
<dbReference type="Pumba" id="Q5EG05"/>
<dbReference type="DNASU" id="114769"/>
<dbReference type="Ensembl" id="ENST00000672037.2">
    <molecule id="Q5EG05-1"/>
    <property type="protein sequence ID" value="ENSP00000509530.1"/>
    <property type="gene ID" value="ENSG00000204397.11"/>
</dbReference>
<dbReference type="Ensembl" id="ENST00000673097.2">
    <molecule id="Q5EG05-2"/>
    <property type="protein sequence ID" value="ENSP00000509408.1"/>
    <property type="gene ID" value="ENSG00000204397.11"/>
</dbReference>
<dbReference type="GeneID" id="114769"/>
<dbReference type="KEGG" id="hsa:114769"/>
<dbReference type="MANE-Select" id="ENST00000673097.2">
    <molecule id="Q5EG05-2"/>
    <property type="protein sequence ID" value="ENSP00000509408.1"/>
    <property type="RefSeq nucleotide sequence ID" value="NM_052889.4"/>
    <property type="RefSeq protein sequence ID" value="NP_443121.1"/>
</dbReference>
<dbReference type="UCSC" id="uc001pio.2">
    <molecule id="Q5EG05-1"/>
    <property type="organism name" value="human"/>
</dbReference>
<dbReference type="AGR" id="HGNC:33701"/>
<dbReference type="CTD" id="114769"/>
<dbReference type="DisGeNET" id="114769"/>
<dbReference type="GeneCards" id="CARD16"/>
<dbReference type="HGNC" id="HGNC:33701">
    <property type="gene designation" value="CARD16"/>
</dbReference>
<dbReference type="HPA" id="ENSG00000204397">
    <property type="expression patterns" value="Tissue enhanced (lymphoid)"/>
</dbReference>
<dbReference type="MIM" id="615680">
    <property type="type" value="gene"/>
</dbReference>
<dbReference type="neXtProt" id="NX_Q5EG05"/>
<dbReference type="OpenTargets" id="ENSG00000204397"/>
<dbReference type="PharmGKB" id="PA164717628"/>
<dbReference type="VEuPathDB" id="HostDB:ENSG00000204397"/>
<dbReference type="eggNOG" id="KOG3573">
    <property type="taxonomic scope" value="Eukaryota"/>
</dbReference>
<dbReference type="GeneTree" id="ENSGT00940000159114"/>
<dbReference type="HOGENOM" id="CLU_119795_0_0_1"/>
<dbReference type="InParanoid" id="Q5EG05"/>
<dbReference type="OMA" id="FITCICE"/>
<dbReference type="PAN-GO" id="Q5EG05">
    <property type="GO annotations" value="2 GO annotations based on evolutionary models"/>
</dbReference>
<dbReference type="PhylomeDB" id="Q5EG05"/>
<dbReference type="TreeFam" id="TF330675"/>
<dbReference type="PathwayCommons" id="Q5EG05"/>
<dbReference type="SignaLink" id="Q5EG05"/>
<dbReference type="BioGRID-ORCS" id="114769">
    <property type="hits" value="8 hits in 1107 CRISPR screens"/>
</dbReference>
<dbReference type="GeneWiki" id="COP1"/>
<dbReference type="GenomeRNAi" id="114769"/>
<dbReference type="Pharos" id="Q5EG05">
    <property type="development level" value="Tbio"/>
</dbReference>
<dbReference type="PRO" id="PR:Q5EG05"/>
<dbReference type="Proteomes" id="UP000005640">
    <property type="component" value="Chromosome 11"/>
</dbReference>
<dbReference type="RNAct" id="Q5EG05">
    <property type="molecule type" value="protein"/>
</dbReference>
<dbReference type="GO" id="GO:0097179">
    <property type="term" value="C:protease inhibitor complex"/>
    <property type="evidence" value="ECO:0000314"/>
    <property type="project" value="UniProtKB"/>
</dbReference>
<dbReference type="GO" id="GO:0032991">
    <property type="term" value="C:protein-containing complex"/>
    <property type="evidence" value="ECO:0000314"/>
    <property type="project" value="UniProtKB"/>
</dbReference>
<dbReference type="GO" id="GO:0050700">
    <property type="term" value="F:CARD domain binding"/>
    <property type="evidence" value="ECO:0000353"/>
    <property type="project" value="UniProtKB"/>
</dbReference>
<dbReference type="GO" id="GO:0089720">
    <property type="term" value="F:caspase binding"/>
    <property type="evidence" value="ECO:0000353"/>
    <property type="project" value="UniProtKB"/>
</dbReference>
<dbReference type="GO" id="GO:0004197">
    <property type="term" value="F:cysteine-type endopeptidase activity"/>
    <property type="evidence" value="ECO:0007669"/>
    <property type="project" value="InterPro"/>
</dbReference>
<dbReference type="GO" id="GO:0004869">
    <property type="term" value="F:cysteine-type endopeptidase inhibitor activity"/>
    <property type="evidence" value="ECO:0000314"/>
    <property type="project" value="UniProtKB"/>
</dbReference>
<dbReference type="GO" id="GO:0042802">
    <property type="term" value="F:identical protein binding"/>
    <property type="evidence" value="ECO:0000314"/>
    <property type="project" value="UniProtKB"/>
</dbReference>
<dbReference type="GO" id="GO:0019900">
    <property type="term" value="F:kinase binding"/>
    <property type="evidence" value="ECO:0000353"/>
    <property type="project" value="UniProtKB"/>
</dbReference>
<dbReference type="GO" id="GO:0071222">
    <property type="term" value="P:cellular response to lipopolysaccharide"/>
    <property type="evidence" value="ECO:0000314"/>
    <property type="project" value="UniProtKB"/>
</dbReference>
<dbReference type="GO" id="GO:0032691">
    <property type="term" value="P:negative regulation of interleukin-1 beta production"/>
    <property type="evidence" value="ECO:0000314"/>
    <property type="project" value="UniProtKB"/>
</dbReference>
<dbReference type="GO" id="GO:0031665">
    <property type="term" value="P:negative regulation of lipopolysaccharide-mediated signaling pathway"/>
    <property type="evidence" value="ECO:0000314"/>
    <property type="project" value="UniProtKB"/>
</dbReference>
<dbReference type="GO" id="GO:0032091">
    <property type="term" value="P:negative regulation of protein binding"/>
    <property type="evidence" value="ECO:0000314"/>
    <property type="project" value="UniProtKB"/>
</dbReference>
<dbReference type="GO" id="GO:0010804">
    <property type="term" value="P:negative regulation of tumor necrosis factor-mediated signaling pathway"/>
    <property type="evidence" value="ECO:0000315"/>
    <property type="project" value="UniProtKB"/>
</dbReference>
<dbReference type="GO" id="GO:0043123">
    <property type="term" value="P:positive regulation of canonical NF-kappaB signal transduction"/>
    <property type="evidence" value="ECO:0000314"/>
    <property type="project" value="UniProtKB"/>
</dbReference>
<dbReference type="GO" id="GO:0051092">
    <property type="term" value="P:positive regulation of NF-kappaB transcription factor activity"/>
    <property type="evidence" value="ECO:0000314"/>
    <property type="project" value="UniProtKB"/>
</dbReference>
<dbReference type="GO" id="GO:0006508">
    <property type="term" value="P:proteolysis"/>
    <property type="evidence" value="ECO:0007669"/>
    <property type="project" value="InterPro"/>
</dbReference>
<dbReference type="GO" id="GO:0042981">
    <property type="term" value="P:regulation of apoptotic process"/>
    <property type="evidence" value="ECO:0007669"/>
    <property type="project" value="InterPro"/>
</dbReference>
<dbReference type="CDD" id="cd08325">
    <property type="entry name" value="CARD_CASP1-like"/>
    <property type="match status" value="1"/>
</dbReference>
<dbReference type="FunFam" id="1.10.533.10:FF:000031">
    <property type="entry name" value="Caspase 1, isoform CRA_b"/>
    <property type="match status" value="1"/>
</dbReference>
<dbReference type="Gene3D" id="1.10.533.10">
    <property type="entry name" value="Death Domain, Fas"/>
    <property type="match status" value="1"/>
</dbReference>
<dbReference type="InterPro" id="IPR001315">
    <property type="entry name" value="CARD"/>
</dbReference>
<dbReference type="InterPro" id="IPR011029">
    <property type="entry name" value="DEATH-like_dom_sf"/>
</dbReference>
<dbReference type="InterPro" id="IPR002398">
    <property type="entry name" value="Pept_C14"/>
</dbReference>
<dbReference type="PANTHER" id="PTHR47901">
    <property type="entry name" value="CASPASE RECRUITMENT DOMAIN-CONTAINING PROTEIN 18"/>
    <property type="match status" value="1"/>
</dbReference>
<dbReference type="PANTHER" id="PTHR47901:SF3">
    <property type="entry name" value="CASPASE-1"/>
    <property type="match status" value="1"/>
</dbReference>
<dbReference type="Pfam" id="PF00619">
    <property type="entry name" value="CARD"/>
    <property type="match status" value="1"/>
</dbReference>
<dbReference type="SMART" id="SM00114">
    <property type="entry name" value="CARD"/>
    <property type="match status" value="1"/>
</dbReference>
<dbReference type="SUPFAM" id="SSF47986">
    <property type="entry name" value="DEATH domain"/>
    <property type="match status" value="1"/>
</dbReference>
<dbReference type="PROSITE" id="PS50209">
    <property type="entry name" value="CARD"/>
    <property type="match status" value="1"/>
</dbReference>
<accession>Q5EG05</accession>
<accession>Q96RJ9</accession>
<name>CAR16_HUMAN</name>